<keyword id="KW-0238">DNA-binding</keyword>
<accession>Q6L2L3</accession>
<feature type="chain" id="PRO_0000121559" description="DNA-binding protein PTO0204">
    <location>
        <begin position="1"/>
        <end position="113"/>
    </location>
</feature>
<reference key="1">
    <citation type="journal article" date="2004" name="Proc. Natl. Acad. Sci. U.S.A.">
        <title>Genome sequence of Picrophilus torridus and its implications for life around pH 0.</title>
        <authorList>
            <person name="Fuetterer O."/>
            <person name="Angelov A."/>
            <person name="Liesegang H."/>
            <person name="Gottschalk G."/>
            <person name="Schleper C."/>
            <person name="Schepers B."/>
            <person name="Dock C."/>
            <person name="Antranikian G."/>
            <person name="Liebl W."/>
        </authorList>
    </citation>
    <scope>NUCLEOTIDE SEQUENCE [LARGE SCALE GENOMIC DNA]</scope>
    <source>
        <strain>ATCC 700027 / DSM 9790 / JCM 10055 / NBRC 100828 / KAW 2/3</strain>
    </source>
</reference>
<name>Y204_PICTO</name>
<evidence type="ECO:0000255" key="1">
    <source>
        <dbReference type="HAMAP-Rule" id="MF_00026"/>
    </source>
</evidence>
<protein>
    <recommendedName>
        <fullName evidence="1">DNA-binding protein PTO0204</fullName>
    </recommendedName>
</protein>
<dbReference type="EMBL" id="AE017261">
    <property type="protein sequence ID" value="AAT42789.1"/>
    <property type="molecule type" value="Genomic_DNA"/>
</dbReference>
<dbReference type="RefSeq" id="WP_011177005.1">
    <property type="nucleotide sequence ID" value="NC_005877.1"/>
</dbReference>
<dbReference type="SMR" id="Q6L2L3"/>
<dbReference type="FunCoup" id="Q6L2L3">
    <property type="interactions" value="92"/>
</dbReference>
<dbReference type="STRING" id="263820.PTO0204"/>
<dbReference type="PaxDb" id="263820-PTO0204"/>
<dbReference type="GeneID" id="2845247"/>
<dbReference type="KEGG" id="pto:PTO0204"/>
<dbReference type="eggNOG" id="arCOG04179">
    <property type="taxonomic scope" value="Archaea"/>
</dbReference>
<dbReference type="HOGENOM" id="CLU_122978_3_0_2"/>
<dbReference type="InParanoid" id="Q6L2L3"/>
<dbReference type="OrthoDB" id="7912at2157"/>
<dbReference type="Proteomes" id="UP000000438">
    <property type="component" value="Chromosome"/>
</dbReference>
<dbReference type="GO" id="GO:0005829">
    <property type="term" value="C:cytosol"/>
    <property type="evidence" value="ECO:0007669"/>
    <property type="project" value="TreeGrafter"/>
</dbReference>
<dbReference type="GO" id="GO:0003677">
    <property type="term" value="F:DNA binding"/>
    <property type="evidence" value="ECO:0007669"/>
    <property type="project" value="UniProtKB-UniRule"/>
</dbReference>
<dbReference type="Gene3D" id="1.10.8.140">
    <property type="entry name" value="PDCD5-like"/>
    <property type="match status" value="1"/>
</dbReference>
<dbReference type="HAMAP" id="MF_00026">
    <property type="entry name" value="dsDNA_bind"/>
    <property type="match status" value="1"/>
</dbReference>
<dbReference type="InterPro" id="IPR022889">
    <property type="entry name" value="DNA_bind_arc"/>
</dbReference>
<dbReference type="InterPro" id="IPR002836">
    <property type="entry name" value="PDCD5-like"/>
</dbReference>
<dbReference type="InterPro" id="IPR036883">
    <property type="entry name" value="PDCD5-like_sf"/>
</dbReference>
<dbReference type="NCBIfam" id="NF003268">
    <property type="entry name" value="PRK04239.1"/>
    <property type="match status" value="1"/>
</dbReference>
<dbReference type="PANTHER" id="PTHR10840">
    <property type="entry name" value="PROGRAMMED CELL DEATH PROTEIN 5"/>
    <property type="match status" value="1"/>
</dbReference>
<dbReference type="PANTHER" id="PTHR10840:SF0">
    <property type="entry name" value="PROGRAMMED CELL DEATH PROTEIN 5"/>
    <property type="match status" value="1"/>
</dbReference>
<dbReference type="Pfam" id="PF01984">
    <property type="entry name" value="dsDNA_bind"/>
    <property type="match status" value="1"/>
</dbReference>
<dbReference type="PIRSF" id="PIRSF015730">
    <property type="entry name" value="TFAR19"/>
    <property type="match status" value="1"/>
</dbReference>
<dbReference type="SUPFAM" id="SSF46950">
    <property type="entry name" value="Double-stranded DNA-binding domain"/>
    <property type="match status" value="1"/>
</dbReference>
<gene>
    <name type="ordered locus">PTO0204</name>
</gene>
<organism>
    <name type="scientific">Picrophilus torridus (strain ATCC 700027 / DSM 9790 / JCM 10055 / NBRC 100828 / KAW 2/3)</name>
    <dbReference type="NCBI Taxonomy" id="1122961"/>
    <lineage>
        <taxon>Archaea</taxon>
        <taxon>Methanobacteriati</taxon>
        <taxon>Thermoplasmatota</taxon>
        <taxon>Thermoplasmata</taxon>
        <taxon>Thermoplasmatales</taxon>
        <taxon>Picrophilaceae</taxon>
        <taxon>Picrophilus</taxon>
    </lineage>
</organism>
<comment type="similarity">
    <text evidence="1">Belongs to the PDCD5 family.</text>
</comment>
<proteinExistence type="inferred from homology"/>
<sequence length="113" mass="13643">MDRDDELDEIRRRKMAEYQNMMQERAYEEEQKKAAAEEEARRQQILRQILSPEARERLSRLKLVRPDLVENVENQLIQLAGMGRINKVISDNELKSILLRLTENRHETRIERR</sequence>